<keyword id="KW-0963">Cytoplasm</keyword>
<keyword id="KW-0235">DNA replication</keyword>
<keyword id="KW-0239">DNA-directed DNA polymerase</keyword>
<keyword id="KW-0548">Nucleotidyltransferase</keyword>
<keyword id="KW-1185">Reference proteome</keyword>
<keyword id="KW-0808">Transferase</keyword>
<gene>
    <name type="primary">dnaE</name>
    <name type="ordered locus">PM0034</name>
</gene>
<proteinExistence type="inferred from homology"/>
<organism>
    <name type="scientific">Pasteurella multocida (strain Pm70)</name>
    <dbReference type="NCBI Taxonomy" id="272843"/>
    <lineage>
        <taxon>Bacteria</taxon>
        <taxon>Pseudomonadati</taxon>
        <taxon>Pseudomonadota</taxon>
        <taxon>Gammaproteobacteria</taxon>
        <taxon>Pasteurellales</taxon>
        <taxon>Pasteurellaceae</taxon>
        <taxon>Pasteurella</taxon>
    </lineage>
</organism>
<sequence length="1159" mass="129281">MSEPRFVHLRVHSDFSMINGIAKVKPLIKACVDNHMVAMGLTDFTNFCGLVRFYGEALSAGVKPIIGADVLVRSELCGDEPFELTLLAKNNIGYHNITLLLSKAYERGYQDLPYLDQAWLAEHREGIIVLSGGHNGDVGKKLLKGHAAEIESAVAFYQDFFPDHFYLSLSRTGRYEEERYVSLALTLAEEKGLPVVATNDVLFLHEDDFEAHEIRVAIHDSYTLDDPKRPKLYTNQQYFRSEQEMCDLFADVPSALENTLLIAQRCNVTIRLGEYFLPQFPTGDLSTEDFLVKKSKEGLEERLKFLFPDEKVRQARRPEYDERLQVELDVINQMGFPGYFLIVMEFIQWSKDNDIPVGPGRGSGAGSLVAYALKITDLDPLEFDLLFERFLNPERVSMPDFDVDFCMDGRDRVIDHVAETYGRGAVSQIITFGTMAAKAVIRDVGRVLGHPYGFVDRISKLIPPDPGMTLAKAFAAEPQLQAVYDSDEEVKALIDMARKLEGVTRNAGKHAGGVVISPGLITDFSPLYCDSEGKHPVTHFDKNDVEYAGLVKFDFLGLRTLTIIKWALDMINTRLAKEGKPPVDIATIPLDDPASFELLKRSETTAVFQLESRGMKDLIKRLQPDCFEDIIALVALFRPGPLESGMVQNFIDRKHGNEVVAYPDPEYQHDSLKPILEPTYGVIVYQEQVMQIAQELAGYTLGGADLLRRAMGKKKPEEMAAQREIFEKGAIQKGVDGELAMKIFDLVEKFAGYGFNKSHSAAYALVSYQTLWLKTHYPAEFMAAVMTSEMDNTDKIVGLYDECLRMGLKVAPPDINTGKHHFSVNEYGEIVYGIGAIKGVGEGPIEALISAREQGGIFKDLFDLCARVDLKKINRRTFESLILSGAFDKLGPHRAALSKNLEDALKASDQHAKDAAMGQADMFGVLTESHEDVEKAYASTPRWSEKVILEGERETLGLYLSSHPISPYLKELAHYSATRLKDLVPNSRGQMSTVSGLLVSSRFAVTKKGNRLGIATLDDRSGRLDITLFGEALDKYADKLQKDTVIIVSGQVSFDEFSGGLKMSVRELMSLDEARSRYAKSLAICLSEENMKPTFIRELKALLTPYSGGTLPIYVYYASTAGQCRVKMGVQWSVNPTDQLFTELAEKLGENAVELEFQS</sequence>
<protein>
    <recommendedName>
        <fullName>DNA polymerase III subunit alpha</fullName>
        <ecNumber>2.7.7.7</ecNumber>
    </recommendedName>
</protein>
<feature type="chain" id="PRO_0000103333" description="DNA polymerase III subunit alpha">
    <location>
        <begin position="1"/>
        <end position="1159"/>
    </location>
</feature>
<evidence type="ECO:0000250" key="1"/>
<evidence type="ECO:0000305" key="2"/>
<accession>Q9CPK3</accession>
<reference key="1">
    <citation type="journal article" date="2001" name="Proc. Natl. Acad. Sci. U.S.A.">
        <title>Complete genomic sequence of Pasteurella multocida Pm70.</title>
        <authorList>
            <person name="May B.J."/>
            <person name="Zhang Q."/>
            <person name="Li L.L."/>
            <person name="Paustian M.L."/>
            <person name="Whittam T.S."/>
            <person name="Kapur V."/>
        </authorList>
    </citation>
    <scope>NUCLEOTIDE SEQUENCE [LARGE SCALE GENOMIC DNA]</scope>
    <source>
        <strain>Pm70</strain>
    </source>
</reference>
<dbReference type="EC" id="2.7.7.7"/>
<dbReference type="EMBL" id="AE004439">
    <property type="protein sequence ID" value="AAK02118.1"/>
    <property type="molecule type" value="Genomic_DNA"/>
</dbReference>
<dbReference type="RefSeq" id="WP_010906442.1">
    <property type="nucleotide sequence ID" value="NC_002663.1"/>
</dbReference>
<dbReference type="SMR" id="Q9CPK3"/>
<dbReference type="STRING" id="272843.PM0034"/>
<dbReference type="EnsemblBacteria" id="AAK02118">
    <property type="protein sequence ID" value="AAK02118"/>
    <property type="gene ID" value="PM0034"/>
</dbReference>
<dbReference type="KEGG" id="pmu:PM0034"/>
<dbReference type="PATRIC" id="fig|272843.6.peg.34"/>
<dbReference type="HOGENOM" id="CLU_001600_0_0_6"/>
<dbReference type="OrthoDB" id="9803237at2"/>
<dbReference type="Proteomes" id="UP000000809">
    <property type="component" value="Chromosome"/>
</dbReference>
<dbReference type="GO" id="GO:0005737">
    <property type="term" value="C:cytoplasm"/>
    <property type="evidence" value="ECO:0007669"/>
    <property type="project" value="UniProtKB-SubCell"/>
</dbReference>
<dbReference type="GO" id="GO:0008408">
    <property type="term" value="F:3'-5' exonuclease activity"/>
    <property type="evidence" value="ECO:0007669"/>
    <property type="project" value="InterPro"/>
</dbReference>
<dbReference type="GO" id="GO:0003887">
    <property type="term" value="F:DNA-directed DNA polymerase activity"/>
    <property type="evidence" value="ECO:0007669"/>
    <property type="project" value="UniProtKB-KW"/>
</dbReference>
<dbReference type="GO" id="GO:0003676">
    <property type="term" value="F:nucleic acid binding"/>
    <property type="evidence" value="ECO:0007669"/>
    <property type="project" value="InterPro"/>
</dbReference>
<dbReference type="GO" id="GO:0006260">
    <property type="term" value="P:DNA replication"/>
    <property type="evidence" value="ECO:0007669"/>
    <property type="project" value="UniProtKB-KW"/>
</dbReference>
<dbReference type="CDD" id="cd04485">
    <property type="entry name" value="DnaE_OBF"/>
    <property type="match status" value="1"/>
</dbReference>
<dbReference type="CDD" id="cd07433">
    <property type="entry name" value="PHP_PolIIIA_DnaE1"/>
    <property type="match status" value="1"/>
</dbReference>
<dbReference type="FunFam" id="1.10.10.1600:FF:000001">
    <property type="entry name" value="DNA polymerase III subunit alpha"/>
    <property type="match status" value="1"/>
</dbReference>
<dbReference type="FunFam" id="1.10.150.870:FF:000001">
    <property type="entry name" value="DNA polymerase III subunit alpha"/>
    <property type="match status" value="1"/>
</dbReference>
<dbReference type="FunFam" id="2.40.50.140:FF:000106">
    <property type="entry name" value="DNA polymerase III subunit alpha"/>
    <property type="match status" value="1"/>
</dbReference>
<dbReference type="Gene3D" id="1.10.150.870">
    <property type="match status" value="1"/>
</dbReference>
<dbReference type="Gene3D" id="1.10.10.1600">
    <property type="entry name" value="Bacterial DNA polymerase III alpha subunit, thumb domain"/>
    <property type="match status" value="1"/>
</dbReference>
<dbReference type="Gene3D" id="3.20.20.140">
    <property type="entry name" value="Metal-dependent hydrolases"/>
    <property type="match status" value="1"/>
</dbReference>
<dbReference type="Gene3D" id="2.40.50.140">
    <property type="entry name" value="Nucleic acid-binding proteins"/>
    <property type="match status" value="1"/>
</dbReference>
<dbReference type="InterPro" id="IPR011708">
    <property type="entry name" value="DNA_pol3_alpha_NTPase_dom"/>
</dbReference>
<dbReference type="InterPro" id="IPR041931">
    <property type="entry name" value="DNA_pol3_alpha_thumb_dom"/>
</dbReference>
<dbReference type="InterPro" id="IPR040982">
    <property type="entry name" value="DNA_pol3_finger"/>
</dbReference>
<dbReference type="InterPro" id="IPR048472">
    <property type="entry name" value="DNA_pol_IIIA_C"/>
</dbReference>
<dbReference type="InterPro" id="IPR004805">
    <property type="entry name" value="DnaE2/DnaE/PolC"/>
</dbReference>
<dbReference type="InterPro" id="IPR029460">
    <property type="entry name" value="DNAPol_HHH"/>
</dbReference>
<dbReference type="InterPro" id="IPR012340">
    <property type="entry name" value="NA-bd_OB-fold"/>
</dbReference>
<dbReference type="InterPro" id="IPR004365">
    <property type="entry name" value="NA-bd_OB_tRNA"/>
</dbReference>
<dbReference type="InterPro" id="IPR004013">
    <property type="entry name" value="PHP_dom"/>
</dbReference>
<dbReference type="InterPro" id="IPR003141">
    <property type="entry name" value="Pol/His_phosphatase_N"/>
</dbReference>
<dbReference type="InterPro" id="IPR016195">
    <property type="entry name" value="Pol/histidinol_Pase-like"/>
</dbReference>
<dbReference type="InterPro" id="IPR049821">
    <property type="entry name" value="PolIIIA_DnaE1_PHP"/>
</dbReference>
<dbReference type="NCBIfam" id="TIGR00594">
    <property type="entry name" value="polc"/>
    <property type="match status" value="1"/>
</dbReference>
<dbReference type="NCBIfam" id="NF004226">
    <property type="entry name" value="PRK05673.1"/>
    <property type="match status" value="1"/>
</dbReference>
<dbReference type="PANTHER" id="PTHR32294">
    <property type="entry name" value="DNA POLYMERASE III SUBUNIT ALPHA"/>
    <property type="match status" value="1"/>
</dbReference>
<dbReference type="PANTHER" id="PTHR32294:SF0">
    <property type="entry name" value="DNA POLYMERASE III SUBUNIT ALPHA"/>
    <property type="match status" value="1"/>
</dbReference>
<dbReference type="Pfam" id="PF07733">
    <property type="entry name" value="DNA_pol3_alpha"/>
    <property type="match status" value="1"/>
</dbReference>
<dbReference type="Pfam" id="PF17657">
    <property type="entry name" value="DNA_pol3_finger"/>
    <property type="match status" value="1"/>
</dbReference>
<dbReference type="Pfam" id="PF20914">
    <property type="entry name" value="DNA_pol_IIIA_C"/>
    <property type="match status" value="1"/>
</dbReference>
<dbReference type="Pfam" id="PF14579">
    <property type="entry name" value="HHH_6"/>
    <property type="match status" value="1"/>
</dbReference>
<dbReference type="Pfam" id="PF02811">
    <property type="entry name" value="PHP"/>
    <property type="match status" value="1"/>
</dbReference>
<dbReference type="Pfam" id="PF01336">
    <property type="entry name" value="tRNA_anti-codon"/>
    <property type="match status" value="1"/>
</dbReference>
<dbReference type="SMART" id="SM00481">
    <property type="entry name" value="POLIIIAc"/>
    <property type="match status" value="1"/>
</dbReference>
<dbReference type="SUPFAM" id="SSF89550">
    <property type="entry name" value="PHP domain-like"/>
    <property type="match status" value="1"/>
</dbReference>
<comment type="function">
    <text evidence="1">DNA polymerase III is a complex, multichain enzyme responsible for most of the replicative synthesis in bacteria. This DNA polymerase also exhibits 3' to 5' exonuclease activity. The alpha chain is the DNA polymerase (By similarity).</text>
</comment>
<comment type="catalytic activity">
    <reaction>
        <text>DNA(n) + a 2'-deoxyribonucleoside 5'-triphosphate = DNA(n+1) + diphosphate</text>
        <dbReference type="Rhea" id="RHEA:22508"/>
        <dbReference type="Rhea" id="RHEA-COMP:17339"/>
        <dbReference type="Rhea" id="RHEA-COMP:17340"/>
        <dbReference type="ChEBI" id="CHEBI:33019"/>
        <dbReference type="ChEBI" id="CHEBI:61560"/>
        <dbReference type="ChEBI" id="CHEBI:173112"/>
        <dbReference type="EC" id="2.7.7.7"/>
    </reaction>
</comment>
<comment type="subunit">
    <text evidence="1">DNA polymerase III contains a core (composed of alpha, epsilon and theta chains) that associates with a tau subunit. This core dimerizes to form the PolIII' complex. PolIII' associates with the gamma complex (composed of gamma, delta, delta', psi and chi chains) and with the beta chain to form the complete DNA polymerase III complex (By similarity).</text>
</comment>
<comment type="subcellular location">
    <subcellularLocation>
        <location evidence="1">Cytoplasm</location>
    </subcellularLocation>
</comment>
<comment type="similarity">
    <text evidence="2">Belongs to the DNA polymerase type-C family. DnaE subfamily.</text>
</comment>
<name>DPO3A_PASMU</name>